<dbReference type="EC" id="2.1.1.190" evidence="1"/>
<dbReference type="EMBL" id="CP000749">
    <property type="protein sequence ID" value="ABR70181.1"/>
    <property type="molecule type" value="Genomic_DNA"/>
</dbReference>
<dbReference type="SMR" id="A6VUQ2"/>
<dbReference type="STRING" id="400668.Mmwyl1_1252"/>
<dbReference type="KEGG" id="mmw:Mmwyl1_1252"/>
<dbReference type="eggNOG" id="COG2265">
    <property type="taxonomic scope" value="Bacteria"/>
</dbReference>
<dbReference type="HOGENOM" id="CLU_014689_8_2_6"/>
<dbReference type="OrthoDB" id="9804590at2"/>
<dbReference type="GO" id="GO:0051539">
    <property type="term" value="F:4 iron, 4 sulfur cluster binding"/>
    <property type="evidence" value="ECO:0007669"/>
    <property type="project" value="UniProtKB-KW"/>
</dbReference>
<dbReference type="GO" id="GO:0005506">
    <property type="term" value="F:iron ion binding"/>
    <property type="evidence" value="ECO:0007669"/>
    <property type="project" value="UniProtKB-UniRule"/>
</dbReference>
<dbReference type="GO" id="GO:0003723">
    <property type="term" value="F:RNA binding"/>
    <property type="evidence" value="ECO:0007669"/>
    <property type="project" value="InterPro"/>
</dbReference>
<dbReference type="GO" id="GO:0070041">
    <property type="term" value="F:rRNA (uridine-C5-)-methyltransferase activity"/>
    <property type="evidence" value="ECO:0007669"/>
    <property type="project" value="UniProtKB-UniRule"/>
</dbReference>
<dbReference type="GO" id="GO:0070475">
    <property type="term" value="P:rRNA base methylation"/>
    <property type="evidence" value="ECO:0007669"/>
    <property type="project" value="TreeGrafter"/>
</dbReference>
<dbReference type="CDD" id="cd02440">
    <property type="entry name" value="AdoMet_MTases"/>
    <property type="match status" value="1"/>
</dbReference>
<dbReference type="FunFam" id="3.40.50.150:FF:000009">
    <property type="entry name" value="23S rRNA (Uracil(1939)-C(5))-methyltransferase RlmD"/>
    <property type="match status" value="1"/>
</dbReference>
<dbReference type="FunFam" id="2.40.50.140:FF:000097">
    <property type="entry name" value="23S rRNA (uracil(1939)-C(5))-methyltransferase RlmD"/>
    <property type="match status" value="1"/>
</dbReference>
<dbReference type="Gene3D" id="2.40.50.1070">
    <property type="match status" value="1"/>
</dbReference>
<dbReference type="Gene3D" id="2.40.50.140">
    <property type="entry name" value="Nucleic acid-binding proteins"/>
    <property type="match status" value="1"/>
</dbReference>
<dbReference type="Gene3D" id="3.40.50.150">
    <property type="entry name" value="Vaccinia Virus protein VP39"/>
    <property type="match status" value="1"/>
</dbReference>
<dbReference type="HAMAP" id="MF_01010">
    <property type="entry name" value="23SrRNA_methyltr_RlmD"/>
    <property type="match status" value="1"/>
</dbReference>
<dbReference type="InterPro" id="IPR001566">
    <property type="entry name" value="23S_rRNA_MeTrfase_RlmD"/>
</dbReference>
<dbReference type="InterPro" id="IPR030390">
    <property type="entry name" value="MeTrfase_TrmA_AS"/>
</dbReference>
<dbReference type="InterPro" id="IPR030391">
    <property type="entry name" value="MeTrfase_TrmA_CS"/>
</dbReference>
<dbReference type="InterPro" id="IPR012340">
    <property type="entry name" value="NA-bd_OB-fold"/>
</dbReference>
<dbReference type="InterPro" id="IPR029063">
    <property type="entry name" value="SAM-dependent_MTases_sf"/>
</dbReference>
<dbReference type="InterPro" id="IPR002792">
    <property type="entry name" value="TRAM_dom"/>
</dbReference>
<dbReference type="InterPro" id="IPR010280">
    <property type="entry name" value="U5_MeTrfase_fam"/>
</dbReference>
<dbReference type="NCBIfam" id="NF009639">
    <property type="entry name" value="PRK13168.1"/>
    <property type="match status" value="1"/>
</dbReference>
<dbReference type="NCBIfam" id="TIGR00479">
    <property type="entry name" value="rumA"/>
    <property type="match status" value="1"/>
</dbReference>
<dbReference type="PANTHER" id="PTHR11061:SF49">
    <property type="entry name" value="23S RRNA (URACIL(1939)-C(5))-METHYLTRANSFERASE RLMD"/>
    <property type="match status" value="1"/>
</dbReference>
<dbReference type="PANTHER" id="PTHR11061">
    <property type="entry name" value="RNA M5U METHYLTRANSFERASE"/>
    <property type="match status" value="1"/>
</dbReference>
<dbReference type="Pfam" id="PF01938">
    <property type="entry name" value="TRAM"/>
    <property type="match status" value="1"/>
</dbReference>
<dbReference type="Pfam" id="PF05958">
    <property type="entry name" value="tRNA_U5-meth_tr"/>
    <property type="match status" value="1"/>
</dbReference>
<dbReference type="SUPFAM" id="SSF50249">
    <property type="entry name" value="Nucleic acid-binding proteins"/>
    <property type="match status" value="1"/>
</dbReference>
<dbReference type="SUPFAM" id="SSF53335">
    <property type="entry name" value="S-adenosyl-L-methionine-dependent methyltransferases"/>
    <property type="match status" value="1"/>
</dbReference>
<dbReference type="PROSITE" id="PS51687">
    <property type="entry name" value="SAM_MT_RNA_M5U"/>
    <property type="match status" value="1"/>
</dbReference>
<dbReference type="PROSITE" id="PS50926">
    <property type="entry name" value="TRAM"/>
    <property type="match status" value="1"/>
</dbReference>
<dbReference type="PROSITE" id="PS01230">
    <property type="entry name" value="TRMA_1"/>
    <property type="match status" value="1"/>
</dbReference>
<dbReference type="PROSITE" id="PS01231">
    <property type="entry name" value="TRMA_2"/>
    <property type="match status" value="1"/>
</dbReference>
<protein>
    <recommendedName>
        <fullName evidence="1">23S rRNA (uracil(1939)-C(5))-methyltransferase RlmD</fullName>
        <ecNumber evidence="1">2.1.1.190</ecNumber>
    </recommendedName>
    <alternativeName>
        <fullName evidence="1">23S rRNA(m5U1939)-methyltransferase</fullName>
    </alternativeName>
</protein>
<gene>
    <name evidence="1" type="primary">rlmD</name>
    <name type="ordered locus">Mmwyl1_1252</name>
</gene>
<accession>A6VUQ2</accession>
<organism>
    <name type="scientific">Marinomonas sp. (strain MWYL1)</name>
    <dbReference type="NCBI Taxonomy" id="400668"/>
    <lineage>
        <taxon>Bacteria</taxon>
        <taxon>Pseudomonadati</taxon>
        <taxon>Pseudomonadota</taxon>
        <taxon>Gammaproteobacteria</taxon>
        <taxon>Oceanospirillales</taxon>
        <taxon>Oceanospirillaceae</taxon>
        <taxon>Marinomonas</taxon>
    </lineage>
</organism>
<evidence type="ECO:0000255" key="1">
    <source>
        <dbReference type="HAMAP-Rule" id="MF_01010"/>
    </source>
</evidence>
<evidence type="ECO:0000256" key="2">
    <source>
        <dbReference type="SAM" id="MobiDB-lite"/>
    </source>
</evidence>
<keyword id="KW-0004">4Fe-4S</keyword>
<keyword id="KW-0408">Iron</keyword>
<keyword id="KW-0411">Iron-sulfur</keyword>
<keyword id="KW-0479">Metal-binding</keyword>
<keyword id="KW-0489">Methyltransferase</keyword>
<keyword id="KW-0698">rRNA processing</keyword>
<keyword id="KW-0949">S-adenosyl-L-methionine</keyword>
<keyword id="KW-0808">Transferase</keyword>
<sequence length="440" mass="49183">MRRRTSPRRTTTSKPQPIGPIQTFEVDGLTHEAKGVARLQGKVTFIEGALPGETVEAQVNKAGRRFDEAVLVNIIEPSVYRVEPSCQHFNLCGGCSFQHLANEQQLSAKADWLQGQLRNLITTQELETLSDTPTGYRRRARLAIDIKKGRMVLGFRGKASKEIISIDQCVVLTPNLQSTFLLLKLKLLENDLAGVLGHVELLEDTKGVSALFRLTSPISDELKNAWEDWAEKGRVALYWQAPKVGKAEVALEKMRYYDLGDLRLKYHPQDFIQVNAAMNQKMVVQAMDWLNPSKQDVILDLFCGVGNFSLPLAVHAQAVIGVEVQETMVEAARENARVNGFDNLSFVAADLTKPVNNELFKQTITKVLLDPPRAGAFEFLDSIIKIGPTQILYVSCNASTLARDAEYLVAKGYRVLRVSLMDMFPQTSHVETMMLLQKKK</sequence>
<reference key="1">
    <citation type="submission" date="2007-06" db="EMBL/GenBank/DDBJ databases">
        <title>Complete sequence of Marinomonas sp. MWYL1.</title>
        <authorList>
            <consortium name="US DOE Joint Genome Institute"/>
            <person name="Copeland A."/>
            <person name="Lucas S."/>
            <person name="Lapidus A."/>
            <person name="Barry K."/>
            <person name="Glavina del Rio T."/>
            <person name="Dalin E."/>
            <person name="Tice H."/>
            <person name="Pitluck S."/>
            <person name="Kiss H."/>
            <person name="Brettin T."/>
            <person name="Bruce D."/>
            <person name="Detter J.C."/>
            <person name="Han C."/>
            <person name="Schmutz J."/>
            <person name="Larimer F."/>
            <person name="Land M."/>
            <person name="Hauser L."/>
            <person name="Kyrpides N."/>
            <person name="Kim E."/>
            <person name="Johnston A.W.B."/>
            <person name="Todd J.D."/>
            <person name="Rogers R."/>
            <person name="Wexler M."/>
            <person name="Bond P.L."/>
            <person name="Li Y."/>
            <person name="Richardson P."/>
        </authorList>
    </citation>
    <scope>NUCLEOTIDE SEQUENCE [LARGE SCALE GENOMIC DNA]</scope>
    <source>
        <strain>MWYL1</strain>
    </source>
</reference>
<feature type="chain" id="PRO_0000414808" description="23S rRNA (uracil(1939)-C(5))-methyltransferase RlmD">
    <location>
        <begin position="1"/>
        <end position="440"/>
    </location>
</feature>
<feature type="domain" description="TRAM" evidence="1">
    <location>
        <begin position="15"/>
        <end position="73"/>
    </location>
</feature>
<feature type="region of interest" description="Disordered" evidence="2">
    <location>
        <begin position="1"/>
        <end position="21"/>
    </location>
</feature>
<feature type="active site" description="Nucleophile" evidence="1">
    <location>
        <position position="396"/>
    </location>
</feature>
<feature type="binding site" evidence="1">
    <location>
        <position position="86"/>
    </location>
    <ligand>
        <name>[4Fe-4S] cluster</name>
        <dbReference type="ChEBI" id="CHEBI:49883"/>
    </ligand>
</feature>
<feature type="binding site" evidence="1">
    <location>
        <position position="92"/>
    </location>
    <ligand>
        <name>[4Fe-4S] cluster</name>
        <dbReference type="ChEBI" id="CHEBI:49883"/>
    </ligand>
</feature>
<feature type="binding site" evidence="1">
    <location>
        <position position="95"/>
    </location>
    <ligand>
        <name>[4Fe-4S] cluster</name>
        <dbReference type="ChEBI" id="CHEBI:49883"/>
    </ligand>
</feature>
<feature type="binding site" evidence="1">
    <location>
        <position position="169"/>
    </location>
    <ligand>
        <name>[4Fe-4S] cluster</name>
        <dbReference type="ChEBI" id="CHEBI:49883"/>
    </ligand>
</feature>
<feature type="binding site" evidence="1">
    <location>
        <position position="273"/>
    </location>
    <ligand>
        <name>S-adenosyl-L-methionine</name>
        <dbReference type="ChEBI" id="CHEBI:59789"/>
    </ligand>
</feature>
<feature type="binding site" evidence="1">
    <location>
        <position position="302"/>
    </location>
    <ligand>
        <name>S-adenosyl-L-methionine</name>
        <dbReference type="ChEBI" id="CHEBI:59789"/>
    </ligand>
</feature>
<feature type="binding site" evidence="1">
    <location>
        <position position="307"/>
    </location>
    <ligand>
        <name>S-adenosyl-L-methionine</name>
        <dbReference type="ChEBI" id="CHEBI:59789"/>
    </ligand>
</feature>
<feature type="binding site" evidence="1">
    <location>
        <position position="323"/>
    </location>
    <ligand>
        <name>S-adenosyl-L-methionine</name>
        <dbReference type="ChEBI" id="CHEBI:59789"/>
    </ligand>
</feature>
<feature type="binding site" evidence="1">
    <location>
        <position position="350"/>
    </location>
    <ligand>
        <name>S-adenosyl-L-methionine</name>
        <dbReference type="ChEBI" id="CHEBI:59789"/>
    </ligand>
</feature>
<feature type="binding site" evidence="1">
    <location>
        <position position="370"/>
    </location>
    <ligand>
        <name>S-adenosyl-L-methionine</name>
        <dbReference type="ChEBI" id="CHEBI:59789"/>
    </ligand>
</feature>
<comment type="function">
    <text evidence="1">Catalyzes the formation of 5-methyl-uridine at position 1939 (m5U1939) in 23S rRNA.</text>
</comment>
<comment type="catalytic activity">
    <reaction evidence="1">
        <text>uridine(1939) in 23S rRNA + S-adenosyl-L-methionine = 5-methyluridine(1939) in 23S rRNA + S-adenosyl-L-homocysteine + H(+)</text>
        <dbReference type="Rhea" id="RHEA:42908"/>
        <dbReference type="Rhea" id="RHEA-COMP:10278"/>
        <dbReference type="Rhea" id="RHEA-COMP:10279"/>
        <dbReference type="ChEBI" id="CHEBI:15378"/>
        <dbReference type="ChEBI" id="CHEBI:57856"/>
        <dbReference type="ChEBI" id="CHEBI:59789"/>
        <dbReference type="ChEBI" id="CHEBI:65315"/>
        <dbReference type="ChEBI" id="CHEBI:74447"/>
        <dbReference type="EC" id="2.1.1.190"/>
    </reaction>
</comment>
<comment type="similarity">
    <text evidence="1">Belongs to the class I-like SAM-binding methyltransferase superfamily. RNA M5U methyltransferase family. RlmD subfamily.</text>
</comment>
<proteinExistence type="inferred from homology"/>
<name>RLMD_MARMS</name>